<gene>
    <name evidence="1" type="primary">def</name>
    <name type="ordered locus">PMM0068</name>
</gene>
<protein>
    <recommendedName>
        <fullName evidence="1">Peptide deformylase</fullName>
        <shortName evidence="1">PDF</shortName>
        <ecNumber evidence="1">3.5.1.88</ecNumber>
    </recommendedName>
    <alternativeName>
        <fullName evidence="1">Polypeptide deformylase</fullName>
    </alternativeName>
</protein>
<proteinExistence type="inferred from homology"/>
<reference key="1">
    <citation type="journal article" date="2003" name="Nature">
        <title>Genome divergence in two Prochlorococcus ecotypes reflects oceanic niche differentiation.</title>
        <authorList>
            <person name="Rocap G."/>
            <person name="Larimer F.W."/>
            <person name="Lamerdin J.E."/>
            <person name="Malfatti S."/>
            <person name="Chain P."/>
            <person name="Ahlgren N.A."/>
            <person name="Arellano A."/>
            <person name="Coleman M."/>
            <person name="Hauser L."/>
            <person name="Hess W.R."/>
            <person name="Johnson Z.I."/>
            <person name="Land M.L."/>
            <person name="Lindell D."/>
            <person name="Post A.F."/>
            <person name="Regala W."/>
            <person name="Shah M."/>
            <person name="Shaw S.L."/>
            <person name="Steglich C."/>
            <person name="Sullivan M.B."/>
            <person name="Ting C.S."/>
            <person name="Tolonen A."/>
            <person name="Webb E.A."/>
            <person name="Zinser E.R."/>
            <person name="Chisholm S.W."/>
        </authorList>
    </citation>
    <scope>NUCLEOTIDE SEQUENCE [LARGE SCALE GENOMIC DNA]</scope>
    <source>
        <strain>CCMP1986 / NIES-2087 / MED4</strain>
    </source>
</reference>
<sequence length="201" mass="22525">MANNFSQLARKSKTNSPIEKVSKEQTGTPSLEIYKLGDDVLRENAKRISKVDNSIRNLAKDMLQSMYAAKGIGLAAPQIGIKKELLVIDVNFEDAAAEPLILINPEITDYGTTLNSYEEGCLSIPGVYLNVVRPSTIKLRFRDEMGRPRKMKADGLLARCIQHEMDHLNGVLFVDRVTSKEDLNKELIKEGFHQKDVIPIK</sequence>
<feature type="chain" id="PRO_0000082818" description="Peptide deformylase">
    <location>
        <begin position="1"/>
        <end position="201"/>
    </location>
</feature>
<feature type="region of interest" description="Disordered" evidence="2">
    <location>
        <begin position="1"/>
        <end position="24"/>
    </location>
</feature>
<feature type="compositionally biased region" description="Polar residues" evidence="2">
    <location>
        <begin position="1"/>
        <end position="17"/>
    </location>
</feature>
<feature type="active site" evidence="1">
    <location>
        <position position="164"/>
    </location>
</feature>
<feature type="binding site" evidence="1">
    <location>
        <position position="121"/>
    </location>
    <ligand>
        <name>Fe cation</name>
        <dbReference type="ChEBI" id="CHEBI:24875"/>
    </ligand>
</feature>
<feature type="binding site" evidence="1">
    <location>
        <position position="163"/>
    </location>
    <ligand>
        <name>Fe cation</name>
        <dbReference type="ChEBI" id="CHEBI:24875"/>
    </ligand>
</feature>
<feature type="binding site" evidence="1">
    <location>
        <position position="167"/>
    </location>
    <ligand>
        <name>Fe cation</name>
        <dbReference type="ChEBI" id="CHEBI:24875"/>
    </ligand>
</feature>
<keyword id="KW-0378">Hydrolase</keyword>
<keyword id="KW-0408">Iron</keyword>
<keyword id="KW-0479">Metal-binding</keyword>
<keyword id="KW-0648">Protein biosynthesis</keyword>
<dbReference type="EC" id="3.5.1.88" evidence="1"/>
<dbReference type="EMBL" id="BX548174">
    <property type="protein sequence ID" value="CAE18527.1"/>
    <property type="molecule type" value="Genomic_DNA"/>
</dbReference>
<dbReference type="RefSeq" id="WP_011131706.1">
    <property type="nucleotide sequence ID" value="NC_005072.1"/>
</dbReference>
<dbReference type="SMR" id="Q7V3K7"/>
<dbReference type="STRING" id="59919.PMM0068"/>
<dbReference type="KEGG" id="pmm:PMM0068"/>
<dbReference type="eggNOG" id="COG0242">
    <property type="taxonomic scope" value="Bacteria"/>
</dbReference>
<dbReference type="HOGENOM" id="CLU_061901_4_2_3"/>
<dbReference type="OrthoDB" id="9784988at2"/>
<dbReference type="Proteomes" id="UP000001026">
    <property type="component" value="Chromosome"/>
</dbReference>
<dbReference type="GO" id="GO:0046872">
    <property type="term" value="F:metal ion binding"/>
    <property type="evidence" value="ECO:0007669"/>
    <property type="project" value="UniProtKB-KW"/>
</dbReference>
<dbReference type="GO" id="GO:0042586">
    <property type="term" value="F:peptide deformylase activity"/>
    <property type="evidence" value="ECO:0007669"/>
    <property type="project" value="UniProtKB-UniRule"/>
</dbReference>
<dbReference type="GO" id="GO:0043686">
    <property type="term" value="P:co-translational protein modification"/>
    <property type="evidence" value="ECO:0007669"/>
    <property type="project" value="TreeGrafter"/>
</dbReference>
<dbReference type="GO" id="GO:0006412">
    <property type="term" value="P:translation"/>
    <property type="evidence" value="ECO:0007669"/>
    <property type="project" value="UniProtKB-UniRule"/>
</dbReference>
<dbReference type="CDD" id="cd00487">
    <property type="entry name" value="Pep_deformylase"/>
    <property type="match status" value="1"/>
</dbReference>
<dbReference type="FunFam" id="3.90.45.10:FF:000005">
    <property type="entry name" value="Peptide deformylase"/>
    <property type="match status" value="1"/>
</dbReference>
<dbReference type="Gene3D" id="3.90.45.10">
    <property type="entry name" value="Peptide deformylase"/>
    <property type="match status" value="1"/>
</dbReference>
<dbReference type="HAMAP" id="MF_00163">
    <property type="entry name" value="Pep_deformylase"/>
    <property type="match status" value="1"/>
</dbReference>
<dbReference type="InterPro" id="IPR023635">
    <property type="entry name" value="Peptide_deformylase"/>
</dbReference>
<dbReference type="InterPro" id="IPR036821">
    <property type="entry name" value="Peptide_deformylase_sf"/>
</dbReference>
<dbReference type="NCBIfam" id="TIGR00079">
    <property type="entry name" value="pept_deformyl"/>
    <property type="match status" value="1"/>
</dbReference>
<dbReference type="NCBIfam" id="NF001159">
    <property type="entry name" value="PRK00150.1-3"/>
    <property type="match status" value="1"/>
</dbReference>
<dbReference type="PANTHER" id="PTHR10458">
    <property type="entry name" value="PEPTIDE DEFORMYLASE"/>
    <property type="match status" value="1"/>
</dbReference>
<dbReference type="PANTHER" id="PTHR10458:SF22">
    <property type="entry name" value="PEPTIDE DEFORMYLASE"/>
    <property type="match status" value="1"/>
</dbReference>
<dbReference type="Pfam" id="PF01327">
    <property type="entry name" value="Pep_deformylase"/>
    <property type="match status" value="1"/>
</dbReference>
<dbReference type="PIRSF" id="PIRSF004749">
    <property type="entry name" value="Pep_def"/>
    <property type="match status" value="1"/>
</dbReference>
<dbReference type="PRINTS" id="PR01576">
    <property type="entry name" value="PDEFORMYLASE"/>
</dbReference>
<dbReference type="SUPFAM" id="SSF56420">
    <property type="entry name" value="Peptide deformylase"/>
    <property type="match status" value="1"/>
</dbReference>
<name>DEF_PROMP</name>
<comment type="function">
    <text evidence="1">Removes the formyl group from the N-terminal Met of newly synthesized proteins. Requires at least a dipeptide for an efficient rate of reaction. N-terminal L-methionine is a prerequisite for activity but the enzyme has broad specificity at other positions.</text>
</comment>
<comment type="catalytic activity">
    <reaction evidence="1">
        <text>N-terminal N-formyl-L-methionyl-[peptide] + H2O = N-terminal L-methionyl-[peptide] + formate</text>
        <dbReference type="Rhea" id="RHEA:24420"/>
        <dbReference type="Rhea" id="RHEA-COMP:10639"/>
        <dbReference type="Rhea" id="RHEA-COMP:10640"/>
        <dbReference type="ChEBI" id="CHEBI:15377"/>
        <dbReference type="ChEBI" id="CHEBI:15740"/>
        <dbReference type="ChEBI" id="CHEBI:49298"/>
        <dbReference type="ChEBI" id="CHEBI:64731"/>
        <dbReference type="EC" id="3.5.1.88"/>
    </reaction>
</comment>
<comment type="cofactor">
    <cofactor evidence="1">
        <name>Fe(2+)</name>
        <dbReference type="ChEBI" id="CHEBI:29033"/>
    </cofactor>
    <text evidence="1">Binds 1 Fe(2+) ion.</text>
</comment>
<comment type="similarity">
    <text evidence="1">Belongs to the polypeptide deformylase family.</text>
</comment>
<accession>Q7V3K7</accession>
<organism>
    <name type="scientific">Prochlorococcus marinus subsp. pastoris (strain CCMP1986 / NIES-2087 / MED4)</name>
    <dbReference type="NCBI Taxonomy" id="59919"/>
    <lineage>
        <taxon>Bacteria</taxon>
        <taxon>Bacillati</taxon>
        <taxon>Cyanobacteriota</taxon>
        <taxon>Cyanophyceae</taxon>
        <taxon>Synechococcales</taxon>
        <taxon>Prochlorococcaceae</taxon>
        <taxon>Prochlorococcus</taxon>
    </lineage>
</organism>
<evidence type="ECO:0000255" key="1">
    <source>
        <dbReference type="HAMAP-Rule" id="MF_00163"/>
    </source>
</evidence>
<evidence type="ECO:0000256" key="2">
    <source>
        <dbReference type="SAM" id="MobiDB-lite"/>
    </source>
</evidence>